<keyword id="KW-0068">Autocatalytic cleavage</keyword>
<keyword id="KW-0210">Decarboxylase</keyword>
<keyword id="KW-0456">Lyase</keyword>
<keyword id="KW-0597">Phosphoprotein</keyword>
<keyword id="KW-0620">Polyamine biosynthesis</keyword>
<keyword id="KW-0670">Pyruvate</keyword>
<keyword id="KW-1185">Reference proteome</keyword>
<keyword id="KW-0949">S-adenosyl-L-methionine</keyword>
<keyword id="KW-0704">Schiff base</keyword>
<keyword id="KW-0745">Spermidine biosynthesis</keyword>
<keyword id="KW-0865">Zymogen</keyword>
<comment type="function">
    <text evidence="4">Essential for biosynthesis of the polyamines spermidine and spermine. Promotes maintenance and self-renewal of embryonic stem cells, by maintaining spermine levels.</text>
</comment>
<comment type="catalytic activity">
    <reaction evidence="2">
        <text>S-adenosyl-L-methionine + H(+) = S-adenosyl 3-(methylsulfanyl)propylamine + CO2</text>
        <dbReference type="Rhea" id="RHEA:15981"/>
        <dbReference type="ChEBI" id="CHEBI:15378"/>
        <dbReference type="ChEBI" id="CHEBI:16526"/>
        <dbReference type="ChEBI" id="CHEBI:57443"/>
        <dbReference type="ChEBI" id="CHEBI:59789"/>
        <dbReference type="EC" id="4.1.1.50"/>
    </reaction>
</comment>
<comment type="cofactor">
    <cofactor>
        <name>pyruvate</name>
        <dbReference type="ChEBI" id="CHEBI:15361"/>
    </cofactor>
    <text>Binds 1 pyruvoyl group covalently per subunit.</text>
</comment>
<comment type="pathway">
    <text>Amine and polyamine biosynthesis; S-adenosylmethioninamine biosynthesis; S-adenosylmethioninamine from S-adenosyl-L-methionine: step 1/1.</text>
</comment>
<comment type="subunit">
    <text evidence="1">Heterotetramer of two alpha and two beta chains.</text>
</comment>
<comment type="interaction">
    <interactant intactId="EBI-644529">
        <id>P0DMN7</id>
    </interactant>
    <interactant intactId="EBI-300201">
        <id>P98083</id>
        <label>Shc1</label>
    </interactant>
    <organismsDiffer>false</organismsDiffer>
    <experiments>7</experiments>
</comment>
<comment type="tissue specificity">
    <text evidence="4">Expressed in embryonic stem cells; subsequently down-regulated in differentiating neural precursor cells.</text>
</comment>
<comment type="PTM">
    <text evidence="2">Is synthesized initially as an inactive proenzyme. Formation of the active enzyme involves a self-maturation process in which the active site pyruvoyl group is generated from an internal serine residue via an autocatalytic post-translational modification. Two non-identical subunits are generated from the proenzyme in this reaction, and the pyruvate is formed at the N-terminus of the alpha chain, which is derived from the carboxyl end of the proenzyme. The post-translation cleavage follows an unusual pathway, termed non-hydrolytic serinolysis, in which the side chain hydroxyl group of the serine supplies its oxygen atom to form the C-terminus of the beta chain, while the remainder of the serine residue undergoes an oxidative deamination to produce ammonia and the pyruvoyl group blocking the N-terminus of the alpha chain.</text>
</comment>
<comment type="disruption phenotype">
    <text evidence="3">Embryonic lethal with developmental arrest between E3.5 and E6.5. Arrest of blastocysts cultured in vitro is rescued by the addition of spermidine.</text>
</comment>
<comment type="similarity">
    <text evidence="5">Belongs to the eukaryotic AdoMetDC family.</text>
</comment>
<feature type="chain" id="PRO_0000029963" description="S-adenosylmethionine decarboxylase 1 beta chain">
    <location>
        <begin position="1"/>
        <end position="67"/>
    </location>
</feature>
<feature type="chain" id="PRO_0000029964" description="S-adenosylmethionine decarboxylase 1 alpha chain">
    <location>
        <begin position="68"/>
        <end position="334"/>
    </location>
</feature>
<feature type="active site" evidence="2">
    <location>
        <position position="8"/>
    </location>
</feature>
<feature type="active site" evidence="2">
    <location>
        <position position="11"/>
    </location>
</feature>
<feature type="active site" description="Schiff-base intermediate with substrate; via pyruvic acid" evidence="2">
    <location>
        <position position="68"/>
    </location>
</feature>
<feature type="active site" description="Proton donor; for catalytic activity" evidence="2">
    <location>
        <position position="82"/>
    </location>
</feature>
<feature type="active site" description="Proton acceptor; for processing activity" evidence="2">
    <location>
        <position position="229"/>
    </location>
</feature>
<feature type="active site" description="Proton acceptor; for processing activity" evidence="2">
    <location>
        <position position="243"/>
    </location>
</feature>
<feature type="binding site" evidence="2">
    <location>
        <position position="7"/>
    </location>
    <ligand>
        <name>substrate</name>
    </ligand>
</feature>
<feature type="binding site" evidence="2">
    <location>
        <position position="67"/>
    </location>
    <ligand>
        <name>substrate</name>
    </ligand>
</feature>
<feature type="binding site" evidence="2">
    <location>
        <position position="223"/>
    </location>
    <ligand>
        <name>substrate</name>
    </ligand>
</feature>
<feature type="binding site" evidence="2">
    <location>
        <position position="247"/>
    </location>
    <ligand>
        <name>substrate</name>
    </ligand>
</feature>
<feature type="site" description="Cleavage (non-hydrolytic); by autolysis" evidence="2">
    <location>
        <begin position="67"/>
        <end position="68"/>
    </location>
</feature>
<feature type="modified residue" description="Pyruvic acid (Ser); by autocatalysis" evidence="2">
    <location>
        <position position="68"/>
    </location>
</feature>
<feature type="modified residue" description="Phosphoserine" evidence="2">
    <location>
        <position position="298"/>
    </location>
</feature>
<gene>
    <name type="primary">Amd1</name>
</gene>
<protein>
    <recommendedName>
        <fullName>S-adenosylmethionine decarboxylase proenzyme 1</fullName>
        <shortName>AdoMetDC 1</shortName>
        <shortName>SAMDC 1</shortName>
        <ecNumber evidence="2">4.1.1.50</ecNumber>
    </recommendedName>
    <component>
        <recommendedName>
            <fullName>S-adenosylmethionine decarboxylase 1 alpha chain</fullName>
        </recommendedName>
    </component>
    <component>
        <recommendedName>
            <fullName>S-adenosylmethionine decarboxylase 1 beta chain</fullName>
        </recommendedName>
    </component>
</protein>
<name>DCAM1_MOUSE</name>
<evidence type="ECO:0000250" key="1"/>
<evidence type="ECO:0000250" key="2">
    <source>
        <dbReference type="UniProtKB" id="P17707"/>
    </source>
</evidence>
<evidence type="ECO:0000269" key="3">
    <source>
    </source>
</evidence>
<evidence type="ECO:0000269" key="4">
    <source>
    </source>
</evidence>
<evidence type="ECO:0000305" key="5"/>
<organism>
    <name type="scientific">Mus musculus</name>
    <name type="common">Mouse</name>
    <dbReference type="NCBI Taxonomy" id="10090"/>
    <lineage>
        <taxon>Eukaryota</taxon>
        <taxon>Metazoa</taxon>
        <taxon>Chordata</taxon>
        <taxon>Craniata</taxon>
        <taxon>Vertebrata</taxon>
        <taxon>Euteleostomi</taxon>
        <taxon>Mammalia</taxon>
        <taxon>Eutheria</taxon>
        <taxon>Euarchontoglires</taxon>
        <taxon>Glires</taxon>
        <taxon>Rodentia</taxon>
        <taxon>Myomorpha</taxon>
        <taxon>Muroidea</taxon>
        <taxon>Muridae</taxon>
        <taxon>Murinae</taxon>
        <taxon>Mus</taxon>
        <taxon>Mus</taxon>
    </lineage>
</organism>
<accession>P0DMN7</accession>
<accession>P31154</accession>
<accession>P82184</accession>
<accession>Q58E47</accession>
<reference key="1">
    <citation type="journal article" date="1992" name="Biochem. Biophys. Res. Commun.">
        <title>Molecular cloning of the mouse S-adenosylmethionine decarboxylase cDNA: specific protein binding to the conserved region of the mRNA 5'-untranslated region.</title>
        <authorList>
            <person name="Waris T."/>
            <person name="Ihalainen R."/>
            <person name="Keraenen M.-R."/>
            <person name="Pajunen A."/>
        </authorList>
    </citation>
    <scope>NUCLEOTIDE SEQUENCE [MRNA]</scope>
    <source>
        <strain>C57BL/6J</strain>
        <tissue>Brain</tissue>
    </source>
</reference>
<reference key="2">
    <citation type="journal article" date="1993" name="Eur. J. Biochem.">
        <title>Overproduction of S-adenosylmethionine decarboxylase in ethylglyoxal-bis(guanylhydrazone)-resistant mouse FM3A cells.</title>
        <authorList>
            <person name="Suzuki T."/>
            <person name="Sadakata Y."/>
            <person name="Kashiwagi K."/>
            <person name="Hoshino K."/>
            <person name="Kakinuma Y."/>
            <person name="Shirahata A."/>
            <person name="Igarashi K."/>
        </authorList>
    </citation>
    <scope>NUCLEOTIDE SEQUENCE [MRNA]</scope>
</reference>
<reference key="3">
    <citation type="journal article" date="1999" name="Gene">
        <title>Gene structure and chromosomal localization of mouse S-adenosylmethionine decarboxylase.</title>
        <authorList>
            <person name="Nishimura K."/>
            <person name="Kashiwagi K."/>
            <person name="Matsuda Y."/>
            <person name="Jaenne O.A."/>
            <person name="Igarashi K."/>
        </authorList>
    </citation>
    <scope>NUCLEOTIDE SEQUENCE [GENOMIC DNA]</scope>
    <source>
        <strain>129/SvJ</strain>
        <tissue>Spleen</tissue>
    </source>
</reference>
<reference key="4">
    <citation type="journal article" date="2005" name="Science">
        <title>The transcriptional landscape of the mammalian genome.</title>
        <authorList>
            <person name="Carninci P."/>
            <person name="Kasukawa T."/>
            <person name="Katayama S."/>
            <person name="Gough J."/>
            <person name="Frith M.C."/>
            <person name="Maeda N."/>
            <person name="Oyama R."/>
            <person name="Ravasi T."/>
            <person name="Lenhard B."/>
            <person name="Wells C."/>
            <person name="Kodzius R."/>
            <person name="Shimokawa K."/>
            <person name="Bajic V.B."/>
            <person name="Brenner S.E."/>
            <person name="Batalov S."/>
            <person name="Forrest A.R."/>
            <person name="Zavolan M."/>
            <person name="Davis M.J."/>
            <person name="Wilming L.G."/>
            <person name="Aidinis V."/>
            <person name="Allen J.E."/>
            <person name="Ambesi-Impiombato A."/>
            <person name="Apweiler R."/>
            <person name="Aturaliya R.N."/>
            <person name="Bailey T.L."/>
            <person name="Bansal M."/>
            <person name="Baxter L."/>
            <person name="Beisel K.W."/>
            <person name="Bersano T."/>
            <person name="Bono H."/>
            <person name="Chalk A.M."/>
            <person name="Chiu K.P."/>
            <person name="Choudhary V."/>
            <person name="Christoffels A."/>
            <person name="Clutterbuck D.R."/>
            <person name="Crowe M.L."/>
            <person name="Dalla E."/>
            <person name="Dalrymple B.P."/>
            <person name="de Bono B."/>
            <person name="Della Gatta G."/>
            <person name="di Bernardo D."/>
            <person name="Down T."/>
            <person name="Engstrom P."/>
            <person name="Fagiolini M."/>
            <person name="Faulkner G."/>
            <person name="Fletcher C.F."/>
            <person name="Fukushima T."/>
            <person name="Furuno M."/>
            <person name="Futaki S."/>
            <person name="Gariboldi M."/>
            <person name="Georgii-Hemming P."/>
            <person name="Gingeras T.R."/>
            <person name="Gojobori T."/>
            <person name="Green R.E."/>
            <person name="Gustincich S."/>
            <person name="Harbers M."/>
            <person name="Hayashi Y."/>
            <person name="Hensch T.K."/>
            <person name="Hirokawa N."/>
            <person name="Hill D."/>
            <person name="Huminiecki L."/>
            <person name="Iacono M."/>
            <person name="Ikeo K."/>
            <person name="Iwama A."/>
            <person name="Ishikawa T."/>
            <person name="Jakt M."/>
            <person name="Kanapin A."/>
            <person name="Katoh M."/>
            <person name="Kawasawa Y."/>
            <person name="Kelso J."/>
            <person name="Kitamura H."/>
            <person name="Kitano H."/>
            <person name="Kollias G."/>
            <person name="Krishnan S.P."/>
            <person name="Kruger A."/>
            <person name="Kummerfeld S.K."/>
            <person name="Kurochkin I.V."/>
            <person name="Lareau L.F."/>
            <person name="Lazarevic D."/>
            <person name="Lipovich L."/>
            <person name="Liu J."/>
            <person name="Liuni S."/>
            <person name="McWilliam S."/>
            <person name="Madan Babu M."/>
            <person name="Madera M."/>
            <person name="Marchionni L."/>
            <person name="Matsuda H."/>
            <person name="Matsuzawa S."/>
            <person name="Miki H."/>
            <person name="Mignone F."/>
            <person name="Miyake S."/>
            <person name="Morris K."/>
            <person name="Mottagui-Tabar S."/>
            <person name="Mulder N."/>
            <person name="Nakano N."/>
            <person name="Nakauchi H."/>
            <person name="Ng P."/>
            <person name="Nilsson R."/>
            <person name="Nishiguchi S."/>
            <person name="Nishikawa S."/>
            <person name="Nori F."/>
            <person name="Ohara O."/>
            <person name="Okazaki Y."/>
            <person name="Orlando V."/>
            <person name="Pang K.C."/>
            <person name="Pavan W.J."/>
            <person name="Pavesi G."/>
            <person name="Pesole G."/>
            <person name="Petrovsky N."/>
            <person name="Piazza S."/>
            <person name="Reed J."/>
            <person name="Reid J.F."/>
            <person name="Ring B.Z."/>
            <person name="Ringwald M."/>
            <person name="Rost B."/>
            <person name="Ruan Y."/>
            <person name="Salzberg S.L."/>
            <person name="Sandelin A."/>
            <person name="Schneider C."/>
            <person name="Schoenbach C."/>
            <person name="Sekiguchi K."/>
            <person name="Semple C.A."/>
            <person name="Seno S."/>
            <person name="Sessa L."/>
            <person name="Sheng Y."/>
            <person name="Shibata Y."/>
            <person name="Shimada H."/>
            <person name="Shimada K."/>
            <person name="Silva D."/>
            <person name="Sinclair B."/>
            <person name="Sperling S."/>
            <person name="Stupka E."/>
            <person name="Sugiura K."/>
            <person name="Sultana R."/>
            <person name="Takenaka Y."/>
            <person name="Taki K."/>
            <person name="Tammoja K."/>
            <person name="Tan S.L."/>
            <person name="Tang S."/>
            <person name="Taylor M.S."/>
            <person name="Tegner J."/>
            <person name="Teichmann S.A."/>
            <person name="Ueda H.R."/>
            <person name="van Nimwegen E."/>
            <person name="Verardo R."/>
            <person name="Wei C.L."/>
            <person name="Yagi K."/>
            <person name="Yamanishi H."/>
            <person name="Zabarovsky E."/>
            <person name="Zhu S."/>
            <person name="Zimmer A."/>
            <person name="Hide W."/>
            <person name="Bult C."/>
            <person name="Grimmond S.M."/>
            <person name="Teasdale R.D."/>
            <person name="Liu E.T."/>
            <person name="Brusic V."/>
            <person name="Quackenbush J."/>
            <person name="Wahlestedt C."/>
            <person name="Mattick J.S."/>
            <person name="Hume D.A."/>
            <person name="Kai C."/>
            <person name="Sasaki D."/>
            <person name="Tomaru Y."/>
            <person name="Fukuda S."/>
            <person name="Kanamori-Katayama M."/>
            <person name="Suzuki M."/>
            <person name="Aoki J."/>
            <person name="Arakawa T."/>
            <person name="Iida J."/>
            <person name="Imamura K."/>
            <person name="Itoh M."/>
            <person name="Kato T."/>
            <person name="Kawaji H."/>
            <person name="Kawagashira N."/>
            <person name="Kawashima T."/>
            <person name="Kojima M."/>
            <person name="Kondo S."/>
            <person name="Konno H."/>
            <person name="Nakano K."/>
            <person name="Ninomiya N."/>
            <person name="Nishio T."/>
            <person name="Okada M."/>
            <person name="Plessy C."/>
            <person name="Shibata K."/>
            <person name="Shiraki T."/>
            <person name="Suzuki S."/>
            <person name="Tagami M."/>
            <person name="Waki K."/>
            <person name="Watahiki A."/>
            <person name="Okamura-Oho Y."/>
            <person name="Suzuki H."/>
            <person name="Kawai J."/>
            <person name="Hayashizaki Y."/>
        </authorList>
    </citation>
    <scope>NUCLEOTIDE SEQUENCE [LARGE SCALE MRNA]</scope>
    <source>
        <strain>C57BL/6J</strain>
        <strain>DBA/2J</strain>
        <tissue>Embryonic kidney</tissue>
        <tissue>Mammary gland</tissue>
    </source>
</reference>
<reference key="5">
    <citation type="submission" date="2005-07" db="EMBL/GenBank/DDBJ databases">
        <title>Cloning of mouse full open reading frames in Gateway(R) system entry vector (pDONR201).</title>
        <authorList>
            <person name="Ebert L."/>
            <person name="Muenstermann E."/>
            <person name="Schatten R."/>
            <person name="Henze S."/>
            <person name="Bohn E."/>
            <person name="Mollenhauer J."/>
            <person name="Wiemann S."/>
            <person name="Schick M."/>
            <person name="Korn B."/>
        </authorList>
    </citation>
    <scope>NUCLEOTIDE SEQUENCE [LARGE SCALE MRNA]</scope>
</reference>
<reference key="6">
    <citation type="submission" date="2005-09" db="EMBL/GenBank/DDBJ databases">
        <authorList>
            <person name="Mural R.J."/>
            <person name="Adams M.D."/>
            <person name="Myers E.W."/>
            <person name="Smith H.O."/>
            <person name="Venter J.C."/>
        </authorList>
    </citation>
    <scope>NUCLEOTIDE SEQUENCE [LARGE SCALE GENOMIC DNA]</scope>
</reference>
<reference key="7">
    <citation type="journal article" date="2004" name="Genome Res.">
        <title>The status, quality, and expansion of the NIH full-length cDNA project: the Mammalian Gene Collection (MGC).</title>
        <authorList>
            <consortium name="The MGC Project Team"/>
        </authorList>
    </citation>
    <scope>NUCLEOTIDE SEQUENCE [LARGE SCALE MRNA]</scope>
    <source>
        <strain>C57BL/6J</strain>
        <strain>Czech II</strain>
        <strain>FVB/N</strain>
        <tissue>Brain</tissue>
        <tissue>Eye</tissue>
        <tissue>Mammary gland</tissue>
    </source>
</reference>
<reference key="8">
    <citation type="journal article" date="2002" name="Genes Cells">
        <title>Essential role of S-adenosylmethionine decarboxylase in mouse embryonic development.</title>
        <authorList>
            <person name="Nishimura K."/>
            <person name="Nakatsu F."/>
            <person name="Kashiwagi K."/>
            <person name="Ohno H."/>
            <person name="Saito T."/>
            <person name="Igarashi K."/>
        </authorList>
    </citation>
    <scope>DISRUPTION PHENOTYPE</scope>
</reference>
<reference key="9">
    <citation type="journal article" date="2012" name="Genes Dev.">
        <title>AMD1 is essential for ESC self-renewal and is translationally down-regulated on differentiation to neural precursor cells.</title>
        <authorList>
            <person name="Zhang D."/>
            <person name="Zhao T."/>
            <person name="Ang H.S."/>
            <person name="Chong P."/>
            <person name="Saiki R."/>
            <person name="Igarashi K."/>
            <person name="Yang H."/>
            <person name="Vardy L.A."/>
        </authorList>
    </citation>
    <scope>FUNCTION</scope>
    <scope>TISSUE SPECIFICITY</scope>
</reference>
<proteinExistence type="evidence at protein level"/>
<dbReference type="EC" id="4.1.1.50" evidence="2"/>
<dbReference type="EMBL" id="Z14986">
    <property type="protein sequence ID" value="CAA78710.1"/>
    <property type="molecule type" value="mRNA"/>
</dbReference>
<dbReference type="EMBL" id="D12780">
    <property type="protein sequence ID" value="BAA02243.1"/>
    <property type="molecule type" value="mRNA"/>
</dbReference>
<dbReference type="EMBL" id="AB025024">
    <property type="protein sequence ID" value="BAA83784.1"/>
    <property type="molecule type" value="Genomic_DNA"/>
</dbReference>
<dbReference type="EMBL" id="AK146840">
    <property type="protein sequence ID" value="BAE27473.1"/>
    <property type="molecule type" value="mRNA"/>
</dbReference>
<dbReference type="EMBL" id="AK166187">
    <property type="protein sequence ID" value="BAE38617.1"/>
    <property type="molecule type" value="mRNA"/>
</dbReference>
<dbReference type="EMBL" id="AK168165">
    <property type="protein sequence ID" value="BAE40126.1"/>
    <property type="molecule type" value="mRNA"/>
</dbReference>
<dbReference type="EMBL" id="CT010192">
    <property type="protein sequence ID" value="CAJ18400.1"/>
    <property type="molecule type" value="mRNA"/>
</dbReference>
<dbReference type="EMBL" id="CH466540">
    <property type="protein sequence ID" value="EDL04951.1"/>
    <property type="molecule type" value="Genomic_DNA"/>
</dbReference>
<dbReference type="EMBL" id="BC011110">
    <property type="protein sequence ID" value="AAH11110.1"/>
    <property type="molecule type" value="mRNA"/>
</dbReference>
<dbReference type="EMBL" id="BC071220">
    <property type="protein sequence ID" value="AAH71220.1"/>
    <property type="molecule type" value="mRNA"/>
</dbReference>
<dbReference type="EMBL" id="BC080791">
    <property type="protein sequence ID" value="AAH80791.1"/>
    <property type="molecule type" value="mRNA"/>
</dbReference>
<dbReference type="EMBL" id="BC092072">
    <property type="protein sequence ID" value="AAH92072.1"/>
    <property type="molecule type" value="mRNA"/>
</dbReference>
<dbReference type="EMBL" id="BC138696">
    <property type="protein sequence ID" value="AAI38697.1"/>
    <property type="molecule type" value="mRNA"/>
</dbReference>
<dbReference type="EMBL" id="BC138697">
    <property type="protein sequence ID" value="AAI38698.1"/>
    <property type="molecule type" value="mRNA"/>
</dbReference>
<dbReference type="CCDS" id="CCDS48544.1"/>
<dbReference type="RefSeq" id="NP_033795.1">
    <property type="nucleotide sequence ID" value="NM_009665.5"/>
</dbReference>
<dbReference type="SMR" id="P0DMN7"/>
<dbReference type="BioGRID" id="198087">
    <property type="interactions" value="1"/>
</dbReference>
<dbReference type="FunCoup" id="P0DMN7">
    <property type="interactions" value="1934"/>
</dbReference>
<dbReference type="IntAct" id="P0DMN7">
    <property type="interactions" value="3"/>
</dbReference>
<dbReference type="MINT" id="P0DMN7"/>
<dbReference type="STRING" id="10090.ENSMUSP00000159133"/>
<dbReference type="ChEMBL" id="CHEMBL3584"/>
<dbReference type="iPTMnet" id="P0DMN7"/>
<dbReference type="PhosphoSitePlus" id="P0DMN7"/>
<dbReference type="jPOST" id="P0DMN7"/>
<dbReference type="PaxDb" id="10090-ENSMUSP00000097528"/>
<dbReference type="ProteomicsDB" id="277963"/>
<dbReference type="Pumba" id="P0DMN7"/>
<dbReference type="DNASU" id="11702"/>
<dbReference type="Ensembl" id="ENSMUST00000099945.6">
    <property type="protein sequence ID" value="ENSMUSP00000097528.5"/>
    <property type="gene ID" value="ENSMUSG00000075232.7"/>
</dbReference>
<dbReference type="Ensembl" id="ENSMUST00000238969.2">
    <property type="protein sequence ID" value="ENSMUSP00000159133.2"/>
    <property type="gene ID" value="ENSMUSG00000075232.7"/>
</dbReference>
<dbReference type="GeneID" id="11702"/>
<dbReference type="KEGG" id="mmu:11702"/>
<dbReference type="AGR" id="MGI:88004"/>
<dbReference type="CTD" id="262"/>
<dbReference type="MGI" id="MGI:88004">
    <property type="gene designation" value="Amd1"/>
</dbReference>
<dbReference type="VEuPathDB" id="HostDB:ENSMUSG00000075232"/>
<dbReference type="eggNOG" id="KOG0788">
    <property type="taxonomic scope" value="Eukaryota"/>
</dbReference>
<dbReference type="GeneTree" id="ENSGT00390000011776"/>
<dbReference type="HOGENOM" id="CLU_023050_1_0_1"/>
<dbReference type="InParanoid" id="P0DMN7"/>
<dbReference type="OMA" id="WFEESSN"/>
<dbReference type="OrthoDB" id="1068353at2759"/>
<dbReference type="PhylomeDB" id="P0DMN7"/>
<dbReference type="BRENDA" id="4.1.1.50">
    <property type="organism ID" value="3474"/>
</dbReference>
<dbReference type="Reactome" id="R-MMU-351202">
    <property type="pathway name" value="Metabolism of polyamines"/>
</dbReference>
<dbReference type="UniPathway" id="UPA00331">
    <property type="reaction ID" value="UER00451"/>
</dbReference>
<dbReference type="BioGRID-ORCS" id="11702">
    <property type="hits" value="16 hits in 79 CRISPR screens"/>
</dbReference>
<dbReference type="ChiTaRS" id="Amd1">
    <property type="organism name" value="mouse"/>
</dbReference>
<dbReference type="PRO" id="PR:P0DMN7"/>
<dbReference type="Proteomes" id="UP000000589">
    <property type="component" value="Chromosome 10"/>
</dbReference>
<dbReference type="RNAct" id="P0DMN7">
    <property type="molecule type" value="protein"/>
</dbReference>
<dbReference type="Bgee" id="ENSMUSG00000075232">
    <property type="expression patterns" value="Expressed in quadriceps femoris and 116 other cell types or tissues"/>
</dbReference>
<dbReference type="ExpressionAtlas" id="P0DMN7">
    <property type="expression patterns" value="baseline and differential"/>
</dbReference>
<dbReference type="GO" id="GO:0004014">
    <property type="term" value="F:adenosylmethionine decarboxylase activity"/>
    <property type="evidence" value="ECO:0007669"/>
    <property type="project" value="UniProtKB-EC"/>
</dbReference>
<dbReference type="GO" id="GO:0008295">
    <property type="term" value="P:spermidine biosynthetic process"/>
    <property type="evidence" value="ECO:0007669"/>
    <property type="project" value="UniProtKB-KW"/>
</dbReference>
<dbReference type="GO" id="GO:0006597">
    <property type="term" value="P:spermine biosynthetic process"/>
    <property type="evidence" value="ECO:0007669"/>
    <property type="project" value="InterPro"/>
</dbReference>
<dbReference type="FunFam" id="3.60.90.10:FF:000003">
    <property type="entry name" value="S-adenosylmethionine decarboxylase proenzyme"/>
    <property type="match status" value="1"/>
</dbReference>
<dbReference type="Gene3D" id="3.60.90.10">
    <property type="entry name" value="S-adenosylmethionine decarboxylase"/>
    <property type="match status" value="1"/>
</dbReference>
<dbReference type="InterPro" id="IPR048283">
    <property type="entry name" value="AdoMetDC-like"/>
</dbReference>
<dbReference type="InterPro" id="IPR001985">
    <property type="entry name" value="S-AdoMet_decarboxylase_euk"/>
</dbReference>
<dbReference type="InterPro" id="IPR016067">
    <property type="entry name" value="S-AdoMet_deCO2ase_core"/>
</dbReference>
<dbReference type="InterPro" id="IPR018166">
    <property type="entry name" value="S-AdoMet_deCO2ase_CS"/>
</dbReference>
<dbReference type="NCBIfam" id="TIGR00535">
    <property type="entry name" value="SAM_DCase"/>
    <property type="match status" value="1"/>
</dbReference>
<dbReference type="PANTHER" id="PTHR11570">
    <property type="entry name" value="S-ADENOSYLMETHIONINE DECARBOXYLASE"/>
    <property type="match status" value="1"/>
</dbReference>
<dbReference type="PANTHER" id="PTHR11570:SF0">
    <property type="entry name" value="S-ADENOSYLMETHIONINE DECARBOXYLASE PROENZYME"/>
    <property type="match status" value="1"/>
</dbReference>
<dbReference type="Pfam" id="PF01536">
    <property type="entry name" value="SAM_decarbox"/>
    <property type="match status" value="1"/>
</dbReference>
<dbReference type="PIRSF" id="PIRSF001355">
    <property type="entry name" value="S-AdenosylMet_decarboxylase"/>
    <property type="match status" value="1"/>
</dbReference>
<dbReference type="SUPFAM" id="SSF56276">
    <property type="entry name" value="S-adenosylmethionine decarboxylase"/>
    <property type="match status" value="1"/>
</dbReference>
<dbReference type="PROSITE" id="PS01336">
    <property type="entry name" value="ADOMETDC"/>
    <property type="match status" value="1"/>
</dbReference>
<sequence>MEAAHFFEGTEKLLEVWFSRQQSDASQGSGDLRTIPRSEWDVLLKDVQCSIISVTKTDKQEAYVLSESSMFVSKRRFILKTCGTTLLLKALVPLLKLARDYSGFDSIQSFFYSRKNFMKPSHQGYPHRNFQEEIEFLNAIFPNGAAYCMGRMNSDCWYLYTLDFPESRVISQPDQTLEILMSELDPAVMDQFYMKDGVTAKDVTRESGIRDLIPGSVIDATLFNPCGYSMNGMKSDGTYWTIHITPEPEFSYVSFETNLSQTSYDDLIRKVVEVFKPGKFVTTLFVNQSSKCRTVLSSPQKIDGFKRLDCQSAMFNDYNFVFTSFAKKQQQQQS</sequence>